<organism>
    <name type="scientific">Bacillus anthracis (strain A0248)</name>
    <dbReference type="NCBI Taxonomy" id="592021"/>
    <lineage>
        <taxon>Bacteria</taxon>
        <taxon>Bacillati</taxon>
        <taxon>Bacillota</taxon>
        <taxon>Bacilli</taxon>
        <taxon>Bacillales</taxon>
        <taxon>Bacillaceae</taxon>
        <taxon>Bacillus</taxon>
        <taxon>Bacillus cereus group</taxon>
    </lineage>
</organism>
<feature type="chain" id="PRO_1000123482" description="Lipoprotein signal peptidase">
    <location>
        <begin position="1"/>
        <end position="152"/>
    </location>
</feature>
<feature type="transmembrane region" description="Helical" evidence="1">
    <location>
        <begin position="55"/>
        <end position="75"/>
    </location>
</feature>
<feature type="transmembrane region" description="Helical" evidence="1">
    <location>
        <begin position="85"/>
        <end position="105"/>
    </location>
</feature>
<feature type="transmembrane region" description="Helical" evidence="1">
    <location>
        <begin position="124"/>
        <end position="144"/>
    </location>
</feature>
<feature type="active site" evidence="1">
    <location>
        <position position="111"/>
    </location>
</feature>
<feature type="active site" evidence="1">
    <location>
        <position position="129"/>
    </location>
</feature>
<protein>
    <recommendedName>
        <fullName evidence="1">Lipoprotein signal peptidase</fullName>
        <ecNumber evidence="1">3.4.23.36</ecNumber>
    </recommendedName>
    <alternativeName>
        <fullName evidence="1">Prolipoprotein signal peptidase</fullName>
    </alternativeName>
    <alternativeName>
        <fullName evidence="1">Signal peptidase II</fullName>
        <shortName evidence="1">SPase II</shortName>
    </alternativeName>
</protein>
<proteinExistence type="inferred from homology"/>
<dbReference type="EC" id="3.4.23.36" evidence="1"/>
<dbReference type="EMBL" id="CP001598">
    <property type="protein sequence ID" value="ACQ45960.1"/>
    <property type="molecule type" value="Genomic_DNA"/>
</dbReference>
<dbReference type="RefSeq" id="WP_000642181.1">
    <property type="nucleotide sequence ID" value="NC_012659.1"/>
</dbReference>
<dbReference type="SMR" id="C3P663"/>
<dbReference type="GeneID" id="45023722"/>
<dbReference type="KEGG" id="bai:BAA_4058"/>
<dbReference type="HOGENOM" id="CLU_083252_3_0_9"/>
<dbReference type="UniPathway" id="UPA00665"/>
<dbReference type="GO" id="GO:0005886">
    <property type="term" value="C:plasma membrane"/>
    <property type="evidence" value="ECO:0007669"/>
    <property type="project" value="UniProtKB-SubCell"/>
</dbReference>
<dbReference type="GO" id="GO:0004190">
    <property type="term" value="F:aspartic-type endopeptidase activity"/>
    <property type="evidence" value="ECO:0007669"/>
    <property type="project" value="UniProtKB-UniRule"/>
</dbReference>
<dbReference type="GO" id="GO:0006508">
    <property type="term" value="P:proteolysis"/>
    <property type="evidence" value="ECO:0007669"/>
    <property type="project" value="UniProtKB-KW"/>
</dbReference>
<dbReference type="HAMAP" id="MF_00161">
    <property type="entry name" value="LspA"/>
    <property type="match status" value="1"/>
</dbReference>
<dbReference type="InterPro" id="IPR001872">
    <property type="entry name" value="Peptidase_A8"/>
</dbReference>
<dbReference type="NCBIfam" id="TIGR00077">
    <property type="entry name" value="lspA"/>
    <property type="match status" value="1"/>
</dbReference>
<dbReference type="PANTHER" id="PTHR33695">
    <property type="entry name" value="LIPOPROTEIN SIGNAL PEPTIDASE"/>
    <property type="match status" value="1"/>
</dbReference>
<dbReference type="PANTHER" id="PTHR33695:SF1">
    <property type="entry name" value="LIPOPROTEIN SIGNAL PEPTIDASE"/>
    <property type="match status" value="1"/>
</dbReference>
<dbReference type="Pfam" id="PF01252">
    <property type="entry name" value="Peptidase_A8"/>
    <property type="match status" value="1"/>
</dbReference>
<dbReference type="PRINTS" id="PR00781">
    <property type="entry name" value="LIPOSIGPTASE"/>
</dbReference>
<dbReference type="PROSITE" id="PS00855">
    <property type="entry name" value="SPASE_II"/>
    <property type="match status" value="1"/>
</dbReference>
<keyword id="KW-0064">Aspartyl protease</keyword>
<keyword id="KW-1003">Cell membrane</keyword>
<keyword id="KW-0378">Hydrolase</keyword>
<keyword id="KW-0472">Membrane</keyword>
<keyword id="KW-0645">Protease</keyword>
<keyword id="KW-0812">Transmembrane</keyword>
<keyword id="KW-1133">Transmembrane helix</keyword>
<gene>
    <name evidence="1" type="primary">lspA</name>
    <name type="ordered locus">BAA_4058</name>
</gene>
<evidence type="ECO:0000255" key="1">
    <source>
        <dbReference type="HAMAP-Rule" id="MF_00161"/>
    </source>
</evidence>
<sequence>MIYYVIALFVIAIDQISKWLIVKNMELGTSIPIIDNVLYITSHRNRGAAWGILENKMWFFYIITVVFVVFIVFYMKKYAKTDKLLGISLGLILGGAIGNFIDRVFRQEVVDFIHVYIFSYNYPVFNIADSALCIGVVLIIIQTLLEGKKTKE</sequence>
<reference key="1">
    <citation type="submission" date="2009-04" db="EMBL/GenBank/DDBJ databases">
        <title>Genome sequence of Bacillus anthracis A0248.</title>
        <authorList>
            <person name="Dodson R.J."/>
            <person name="Munk A.C."/>
            <person name="Bruce D."/>
            <person name="Detter C."/>
            <person name="Tapia R."/>
            <person name="Sutton G."/>
            <person name="Sims D."/>
            <person name="Brettin T."/>
        </authorList>
    </citation>
    <scope>NUCLEOTIDE SEQUENCE [LARGE SCALE GENOMIC DNA]</scope>
    <source>
        <strain>A0248</strain>
    </source>
</reference>
<name>LSPA_BACAA</name>
<accession>C3P663</accession>
<comment type="function">
    <text evidence="1">This protein specifically catalyzes the removal of signal peptides from prolipoproteins.</text>
</comment>
<comment type="catalytic activity">
    <reaction evidence="1">
        <text>Release of signal peptides from bacterial membrane prolipoproteins. Hydrolyzes -Xaa-Yaa-Zaa-|-(S,diacylglyceryl)Cys-, in which Xaa is hydrophobic (preferably Leu), and Yaa (Ala or Ser) and Zaa (Gly or Ala) have small, neutral side chains.</text>
        <dbReference type="EC" id="3.4.23.36"/>
    </reaction>
</comment>
<comment type="pathway">
    <text evidence="1">Protein modification; lipoprotein biosynthesis (signal peptide cleavage).</text>
</comment>
<comment type="subcellular location">
    <subcellularLocation>
        <location evidence="1">Cell membrane</location>
        <topology evidence="1">Multi-pass membrane protein</topology>
    </subcellularLocation>
</comment>
<comment type="similarity">
    <text evidence="1">Belongs to the peptidase A8 family.</text>
</comment>